<comment type="function">
    <text evidence="1">Involved in the activation and reutilization of phytol from chlorophyll degradation in plant metabolism, including tocopherol biosynthesis. Catalyzes the conversion of phytol to phytol monophosphate (PMP) (By similarity).</text>
</comment>
<comment type="catalytic activity">
    <reaction>
        <text>phytol + CTP = phytyl phosphate + CDP + H(+)</text>
        <dbReference type="Rhea" id="RHEA:38055"/>
        <dbReference type="ChEBI" id="CHEBI:15378"/>
        <dbReference type="ChEBI" id="CHEBI:17327"/>
        <dbReference type="ChEBI" id="CHEBI:37563"/>
        <dbReference type="ChEBI" id="CHEBI:58069"/>
        <dbReference type="ChEBI" id="CHEBI:75483"/>
        <dbReference type="EC" id="2.7.1.182"/>
    </reaction>
</comment>
<comment type="pathway">
    <text>Cofactor biosynthesis; tocopherol biosynthesis.</text>
</comment>
<comment type="subcellular location">
    <subcellularLocation>
        <location evidence="3">Plastid</location>
        <location evidence="3">Chloroplast membrane</location>
        <topology evidence="3">Multi-pass membrane protein</topology>
    </subcellularLocation>
</comment>
<comment type="similarity">
    <text evidence="3">Belongs to the polyprenol kinase family.</text>
</comment>
<comment type="sequence caution" evidence="3">
    <conflict type="erroneous gene model prediction">
        <sequence resource="EMBL-CDS" id="BAD81857"/>
    </conflict>
</comment>
<proteinExistence type="evidence at transcript level"/>
<dbReference type="EC" id="2.7.1.182"/>
<dbReference type="EMBL" id="AP003252">
    <property type="protein sequence ID" value="BAD81857.1"/>
    <property type="status" value="ALT_SEQ"/>
    <property type="molecule type" value="Genomic_DNA"/>
</dbReference>
<dbReference type="EMBL" id="AP014957">
    <property type="status" value="NOT_ANNOTATED_CDS"/>
    <property type="molecule type" value="Genomic_DNA"/>
</dbReference>
<dbReference type="EMBL" id="AK061265">
    <property type="status" value="NOT_ANNOTATED_CDS"/>
    <property type="molecule type" value="mRNA"/>
</dbReference>
<dbReference type="RefSeq" id="XP_015624995.1">
    <property type="nucleotide sequence ID" value="XM_015769509.1"/>
</dbReference>
<dbReference type="FunCoup" id="Q5N9J9">
    <property type="interactions" value="18"/>
</dbReference>
<dbReference type="STRING" id="39947.Q5N9J9"/>
<dbReference type="PaxDb" id="39947-Q5N9J9"/>
<dbReference type="EnsemblPlants" id="Os01t0832000-01">
    <property type="protein sequence ID" value="Os01t0832000-01"/>
    <property type="gene ID" value="Os01g0832000"/>
</dbReference>
<dbReference type="Gramene" id="Os01t0832000-01">
    <property type="protein sequence ID" value="Os01t0832000-01"/>
    <property type="gene ID" value="Os01g0832000"/>
</dbReference>
<dbReference type="eggNOG" id="KOG4453">
    <property type="taxonomic scope" value="Eukaryota"/>
</dbReference>
<dbReference type="InParanoid" id="Q5N9J9"/>
<dbReference type="OrthoDB" id="5673at2759"/>
<dbReference type="UniPathway" id="UPA00160"/>
<dbReference type="Proteomes" id="UP000000763">
    <property type="component" value="Chromosome 1"/>
</dbReference>
<dbReference type="Proteomes" id="UP000059680">
    <property type="component" value="Chromosome 1"/>
</dbReference>
<dbReference type="GO" id="GO:0031969">
    <property type="term" value="C:chloroplast membrane"/>
    <property type="evidence" value="ECO:0007669"/>
    <property type="project" value="UniProtKB-SubCell"/>
</dbReference>
<dbReference type="GO" id="GO:0016301">
    <property type="term" value="F:kinase activity"/>
    <property type="evidence" value="ECO:0000318"/>
    <property type="project" value="GO_Central"/>
</dbReference>
<dbReference type="GO" id="GO:0010276">
    <property type="term" value="F:phytol kinase activity"/>
    <property type="evidence" value="ECO:0007669"/>
    <property type="project" value="UniProtKB-EC"/>
</dbReference>
<dbReference type="GO" id="GO:0010189">
    <property type="term" value="P:vitamin E biosynthetic process"/>
    <property type="evidence" value="ECO:0007669"/>
    <property type="project" value="UniProtKB-UniPathway"/>
</dbReference>
<dbReference type="InterPro" id="IPR039606">
    <property type="entry name" value="Phytol/farnesol_kinase"/>
</dbReference>
<dbReference type="PANTHER" id="PTHR32523:SF7">
    <property type="entry name" value="FARNESOL KINASE, CHLOROPLASTIC"/>
    <property type="match status" value="1"/>
</dbReference>
<dbReference type="PANTHER" id="PTHR32523">
    <property type="entry name" value="PHYTOL KINASE 1, CHLOROPLASTIC"/>
    <property type="match status" value="1"/>
</dbReference>
<name>PHYK2_ORYSJ</name>
<protein>
    <recommendedName>
        <fullName>Probable phytol kinase 2, chloroplastic</fullName>
        <ecNumber>2.7.1.182</ecNumber>
    </recommendedName>
</protein>
<accession>Q5N9J9</accession>
<gene>
    <name type="ordered locus">Os01g0832000</name>
    <name type="ordered locus">LOC_Os01g61560</name>
    <name type="ORF">P0446G04.41</name>
</gene>
<feature type="transit peptide" description="Chloroplast" evidence="2">
    <location>
        <begin position="1"/>
        <end position="59"/>
    </location>
</feature>
<feature type="chain" id="PRO_0000226599" description="Probable phytol kinase 2, chloroplastic">
    <location>
        <begin position="60"/>
        <end position="304"/>
    </location>
</feature>
<feature type="transmembrane region" description="Helical" evidence="2">
    <location>
        <begin position="68"/>
        <end position="88"/>
    </location>
</feature>
<feature type="transmembrane region" description="Helical" evidence="2">
    <location>
        <begin position="113"/>
        <end position="133"/>
    </location>
</feature>
<feature type="transmembrane region" description="Helical" evidence="2">
    <location>
        <begin position="134"/>
        <end position="154"/>
    </location>
</feature>
<feature type="transmembrane region" description="Helical" evidence="2">
    <location>
        <begin position="170"/>
        <end position="190"/>
    </location>
</feature>
<feature type="transmembrane region" description="Helical" evidence="2">
    <location>
        <begin position="194"/>
        <end position="214"/>
    </location>
</feature>
<feature type="transmembrane region" description="Helical" evidence="2">
    <location>
        <begin position="231"/>
        <end position="251"/>
    </location>
</feature>
<feature type="transmembrane region" description="Helical" evidence="2">
    <location>
        <begin position="256"/>
        <end position="276"/>
    </location>
</feature>
<organism>
    <name type="scientific">Oryza sativa subsp. japonica</name>
    <name type="common">Rice</name>
    <dbReference type="NCBI Taxonomy" id="39947"/>
    <lineage>
        <taxon>Eukaryota</taxon>
        <taxon>Viridiplantae</taxon>
        <taxon>Streptophyta</taxon>
        <taxon>Embryophyta</taxon>
        <taxon>Tracheophyta</taxon>
        <taxon>Spermatophyta</taxon>
        <taxon>Magnoliopsida</taxon>
        <taxon>Liliopsida</taxon>
        <taxon>Poales</taxon>
        <taxon>Poaceae</taxon>
        <taxon>BOP clade</taxon>
        <taxon>Oryzoideae</taxon>
        <taxon>Oryzeae</taxon>
        <taxon>Oryzinae</taxon>
        <taxon>Oryza</taxon>
        <taxon>Oryza sativa</taxon>
    </lineage>
</organism>
<evidence type="ECO:0000250" key="1"/>
<evidence type="ECO:0000255" key="2"/>
<evidence type="ECO:0000305" key="3"/>
<keyword id="KW-0150">Chloroplast</keyword>
<keyword id="KW-0418">Kinase</keyword>
<keyword id="KW-0472">Membrane</keyword>
<keyword id="KW-0934">Plastid</keyword>
<keyword id="KW-1185">Reference proteome</keyword>
<keyword id="KW-0808">Transferase</keyword>
<keyword id="KW-0809">Transit peptide</keyword>
<keyword id="KW-0812">Transmembrane</keyword>
<keyword id="KW-1133">Transmembrane helix</keyword>
<sequence>MVSLISAHLLSLPSSAPRSRPQSRPPLSPPAAAAAASCSFDLPRPRRLVADGSRRKGTMAAAIPPEASGLAHDLGSAAVTAGVALALLRFFEELAKRGVFEQKLNRKLVHITIGMVFLLFWPLFSSGSYAPFLAAVAPGINIIRMLLLGLGVMKNEAMVKSMSRSGDPRELLKGPLYYATTITFATSIFWRTSPIAIALICNLCAGDGIADIVGRRLGQEKLPYNPNKSYAGSIAMALAGFMASIGYMHYFQSFGFIEESWSLAFGFLVVSVTAALVESHPISTHLDDNLTVPLTSFLVGSLVF</sequence>
<reference key="1">
    <citation type="journal article" date="2002" name="Nature">
        <title>The genome sequence and structure of rice chromosome 1.</title>
        <authorList>
            <person name="Sasaki T."/>
            <person name="Matsumoto T."/>
            <person name="Yamamoto K."/>
            <person name="Sakata K."/>
            <person name="Baba T."/>
            <person name="Katayose Y."/>
            <person name="Wu J."/>
            <person name="Niimura Y."/>
            <person name="Cheng Z."/>
            <person name="Nagamura Y."/>
            <person name="Antonio B.A."/>
            <person name="Kanamori H."/>
            <person name="Hosokawa S."/>
            <person name="Masukawa M."/>
            <person name="Arikawa K."/>
            <person name="Chiden Y."/>
            <person name="Hayashi M."/>
            <person name="Okamoto M."/>
            <person name="Ando T."/>
            <person name="Aoki H."/>
            <person name="Arita K."/>
            <person name="Hamada M."/>
            <person name="Harada C."/>
            <person name="Hijishita S."/>
            <person name="Honda M."/>
            <person name="Ichikawa Y."/>
            <person name="Idonuma A."/>
            <person name="Iijima M."/>
            <person name="Ikeda M."/>
            <person name="Ikeno M."/>
            <person name="Ito S."/>
            <person name="Ito T."/>
            <person name="Ito Y."/>
            <person name="Ito Y."/>
            <person name="Iwabuchi A."/>
            <person name="Kamiya K."/>
            <person name="Karasawa W."/>
            <person name="Katagiri S."/>
            <person name="Kikuta A."/>
            <person name="Kobayashi N."/>
            <person name="Kono I."/>
            <person name="Machita K."/>
            <person name="Maehara T."/>
            <person name="Mizuno H."/>
            <person name="Mizubayashi T."/>
            <person name="Mukai Y."/>
            <person name="Nagasaki H."/>
            <person name="Nakashima M."/>
            <person name="Nakama Y."/>
            <person name="Nakamichi Y."/>
            <person name="Nakamura M."/>
            <person name="Namiki N."/>
            <person name="Negishi M."/>
            <person name="Ohta I."/>
            <person name="Ono N."/>
            <person name="Saji S."/>
            <person name="Sakai K."/>
            <person name="Shibata M."/>
            <person name="Shimokawa T."/>
            <person name="Shomura A."/>
            <person name="Song J."/>
            <person name="Takazaki Y."/>
            <person name="Terasawa K."/>
            <person name="Tsuji K."/>
            <person name="Waki K."/>
            <person name="Yamagata H."/>
            <person name="Yamane H."/>
            <person name="Yoshiki S."/>
            <person name="Yoshihara R."/>
            <person name="Yukawa K."/>
            <person name="Zhong H."/>
            <person name="Iwama H."/>
            <person name="Endo T."/>
            <person name="Ito H."/>
            <person name="Hahn J.H."/>
            <person name="Kim H.-I."/>
            <person name="Eun M.-Y."/>
            <person name="Yano M."/>
            <person name="Jiang J."/>
            <person name="Gojobori T."/>
        </authorList>
    </citation>
    <scope>NUCLEOTIDE SEQUENCE [LARGE SCALE GENOMIC DNA]</scope>
    <source>
        <strain>cv. Nipponbare</strain>
    </source>
</reference>
<reference key="2">
    <citation type="journal article" date="2005" name="Nature">
        <title>The map-based sequence of the rice genome.</title>
        <authorList>
            <consortium name="International rice genome sequencing project (IRGSP)"/>
        </authorList>
    </citation>
    <scope>NUCLEOTIDE SEQUENCE [LARGE SCALE GENOMIC DNA]</scope>
    <source>
        <strain>cv. Nipponbare</strain>
    </source>
</reference>
<reference key="3">
    <citation type="journal article" date="2013" name="Rice">
        <title>Improvement of the Oryza sativa Nipponbare reference genome using next generation sequence and optical map data.</title>
        <authorList>
            <person name="Kawahara Y."/>
            <person name="de la Bastide M."/>
            <person name="Hamilton J.P."/>
            <person name="Kanamori H."/>
            <person name="McCombie W.R."/>
            <person name="Ouyang S."/>
            <person name="Schwartz D.C."/>
            <person name="Tanaka T."/>
            <person name="Wu J."/>
            <person name="Zhou S."/>
            <person name="Childs K.L."/>
            <person name="Davidson R.M."/>
            <person name="Lin H."/>
            <person name="Quesada-Ocampo L."/>
            <person name="Vaillancourt B."/>
            <person name="Sakai H."/>
            <person name="Lee S.S."/>
            <person name="Kim J."/>
            <person name="Numa H."/>
            <person name="Itoh T."/>
            <person name="Buell C.R."/>
            <person name="Matsumoto T."/>
        </authorList>
    </citation>
    <scope>GENOME REANNOTATION</scope>
    <source>
        <strain>cv. Nipponbare</strain>
    </source>
</reference>
<reference key="4">
    <citation type="journal article" date="2003" name="Science">
        <title>Collection, mapping, and annotation of over 28,000 cDNA clones from japonica rice.</title>
        <authorList>
            <consortium name="The rice full-length cDNA consortium"/>
        </authorList>
    </citation>
    <scope>NUCLEOTIDE SEQUENCE [LARGE SCALE MRNA] OF 9-304</scope>
    <source>
        <strain>cv. Nipponbare</strain>
    </source>
</reference>
<reference key="5">
    <citation type="journal article" date="2006" name="Plant Cell">
        <title>The Arabidopsis vitamin E pathway gene5-1 mutant reveals a critical role for phytol kinase in seed tocopherol biosynthesis.</title>
        <authorList>
            <person name="Valentin H.E."/>
            <person name="Lincoln K."/>
            <person name="Moshiri F."/>
            <person name="Jensen P.K."/>
            <person name="Qi Q."/>
            <person name="Venkatesh T.V."/>
            <person name="Karunanandaa B."/>
            <person name="Baszis S.R."/>
            <person name="Norris S.R."/>
            <person name="Savidge B."/>
            <person name="Gruys K.J."/>
            <person name="Last R.L."/>
        </authorList>
    </citation>
    <scope>IDENTIFICATION</scope>
</reference>